<sequence length="409" mass="46740">MAQNFTKLNPQFENIIFEHDDNQMILNFGPQHPSSHGQLRLILELEGEKIIKATPEIGYLHRGCEKLGENMTYNEYMPTTDRLDYTSSTSNNYAYAYAVETLLNLEIPRRAQVIRTILLELNRMISHIFFISVHALDVGAMSVFLYAFKTREYGLDLMEDYCGARLTHNAIRIGGVPLDLPPNWLEGLKKFLGEMRECKKLIQGLLDKNRIWRMRLENVGVVTPKMAQSWGMSGIMLRGTGIAYDIRKEEPYELYKELDFDVPVGNYGDSYDRYCLYMLEIDESIRIIEQLIPMYAKTDTPIMAQNPHYISAPKEDIMTQNYALMQHFVLVAQGMRPPVGEVYAPTESPKGELGFFIHSEGEPYPHRLKIRAPSFYHIGALSDILVGQYLADAVTVIGSTNAVFGEVDR</sequence>
<dbReference type="EC" id="7.1.1.-" evidence="1"/>
<dbReference type="EMBL" id="CP001217">
    <property type="protein sequence ID" value="ACJ08381.1"/>
    <property type="molecule type" value="Genomic_DNA"/>
</dbReference>
<dbReference type="SMR" id="B6JNA3"/>
<dbReference type="KEGG" id="hpp:HPP12_1229"/>
<dbReference type="HOGENOM" id="CLU_015134_1_2_7"/>
<dbReference type="Proteomes" id="UP000008198">
    <property type="component" value="Chromosome"/>
</dbReference>
<dbReference type="GO" id="GO:0005886">
    <property type="term" value="C:plasma membrane"/>
    <property type="evidence" value="ECO:0007669"/>
    <property type="project" value="UniProtKB-SubCell"/>
</dbReference>
<dbReference type="GO" id="GO:0051287">
    <property type="term" value="F:NAD binding"/>
    <property type="evidence" value="ECO:0007669"/>
    <property type="project" value="InterPro"/>
</dbReference>
<dbReference type="GO" id="GO:0050136">
    <property type="term" value="F:NADH:ubiquinone reductase (non-electrogenic) activity"/>
    <property type="evidence" value="ECO:0007669"/>
    <property type="project" value="UniProtKB-UniRule"/>
</dbReference>
<dbReference type="GO" id="GO:0048038">
    <property type="term" value="F:quinone binding"/>
    <property type="evidence" value="ECO:0007669"/>
    <property type="project" value="UniProtKB-KW"/>
</dbReference>
<dbReference type="Gene3D" id="1.10.645.10">
    <property type="entry name" value="Cytochrome-c3 Hydrogenase, chain B"/>
    <property type="match status" value="1"/>
</dbReference>
<dbReference type="HAMAP" id="MF_01358">
    <property type="entry name" value="NDH1_NuoD"/>
    <property type="match status" value="1"/>
</dbReference>
<dbReference type="InterPro" id="IPR001135">
    <property type="entry name" value="NADH_Q_OxRdtase_suD"/>
</dbReference>
<dbReference type="InterPro" id="IPR022885">
    <property type="entry name" value="NDH1_su_D/H"/>
</dbReference>
<dbReference type="InterPro" id="IPR029014">
    <property type="entry name" value="NiFe-Hase_large"/>
</dbReference>
<dbReference type="NCBIfam" id="TIGR01962">
    <property type="entry name" value="NuoD"/>
    <property type="match status" value="1"/>
</dbReference>
<dbReference type="NCBIfam" id="NF004739">
    <property type="entry name" value="PRK06075.1"/>
    <property type="match status" value="1"/>
</dbReference>
<dbReference type="PANTHER" id="PTHR11993:SF10">
    <property type="entry name" value="NADH DEHYDROGENASE [UBIQUINONE] IRON-SULFUR PROTEIN 2, MITOCHONDRIAL"/>
    <property type="match status" value="1"/>
</dbReference>
<dbReference type="PANTHER" id="PTHR11993">
    <property type="entry name" value="NADH-UBIQUINONE OXIDOREDUCTASE 49 KDA SUBUNIT"/>
    <property type="match status" value="1"/>
</dbReference>
<dbReference type="Pfam" id="PF00346">
    <property type="entry name" value="Complex1_49kDa"/>
    <property type="match status" value="1"/>
</dbReference>
<dbReference type="SUPFAM" id="SSF56762">
    <property type="entry name" value="HydB/Nqo4-like"/>
    <property type="match status" value="1"/>
</dbReference>
<comment type="function">
    <text evidence="1">NDH-1 shuttles electrons from NADH, via FMN and iron-sulfur (Fe-S) centers, to quinones in the respiratory chain. The immediate electron acceptor for the enzyme in this species is believed to be ubiquinone. Couples the redox reaction to proton translocation (for every two electrons transferred, four hydrogen ions are translocated across the cytoplasmic membrane), and thus conserves the redox energy in a proton gradient.</text>
</comment>
<comment type="catalytic activity">
    <reaction evidence="1">
        <text>a quinone + NADH + 5 H(+)(in) = a quinol + NAD(+) + 4 H(+)(out)</text>
        <dbReference type="Rhea" id="RHEA:57888"/>
        <dbReference type="ChEBI" id="CHEBI:15378"/>
        <dbReference type="ChEBI" id="CHEBI:24646"/>
        <dbReference type="ChEBI" id="CHEBI:57540"/>
        <dbReference type="ChEBI" id="CHEBI:57945"/>
        <dbReference type="ChEBI" id="CHEBI:132124"/>
    </reaction>
</comment>
<comment type="subunit">
    <text evidence="1">NDH-1 is composed of 14 different subunits. Subunits NuoB, C, D, E, F, and G constitute the peripheral sector of the complex.</text>
</comment>
<comment type="subcellular location">
    <subcellularLocation>
        <location evidence="1">Cell inner membrane</location>
        <topology evidence="1">Peripheral membrane protein</topology>
        <orientation evidence="1">Cytoplasmic side</orientation>
    </subcellularLocation>
</comment>
<comment type="similarity">
    <text evidence="1">Belongs to the complex I 49 kDa subunit family.</text>
</comment>
<organism>
    <name type="scientific">Helicobacter pylori (strain P12)</name>
    <dbReference type="NCBI Taxonomy" id="570508"/>
    <lineage>
        <taxon>Bacteria</taxon>
        <taxon>Pseudomonadati</taxon>
        <taxon>Campylobacterota</taxon>
        <taxon>Epsilonproteobacteria</taxon>
        <taxon>Campylobacterales</taxon>
        <taxon>Helicobacteraceae</taxon>
        <taxon>Helicobacter</taxon>
    </lineage>
</organism>
<accession>B6JNA3</accession>
<evidence type="ECO:0000255" key="1">
    <source>
        <dbReference type="HAMAP-Rule" id="MF_01358"/>
    </source>
</evidence>
<keyword id="KW-0997">Cell inner membrane</keyword>
<keyword id="KW-1003">Cell membrane</keyword>
<keyword id="KW-0472">Membrane</keyword>
<keyword id="KW-0520">NAD</keyword>
<keyword id="KW-0874">Quinone</keyword>
<keyword id="KW-1278">Translocase</keyword>
<keyword id="KW-0813">Transport</keyword>
<keyword id="KW-0830">Ubiquinone</keyword>
<proteinExistence type="inferred from homology"/>
<protein>
    <recommendedName>
        <fullName evidence="1">NADH-quinone oxidoreductase subunit D</fullName>
        <ecNumber evidence="1">7.1.1.-</ecNumber>
    </recommendedName>
    <alternativeName>
        <fullName evidence="1">NADH dehydrogenase I subunit D</fullName>
    </alternativeName>
    <alternativeName>
        <fullName evidence="1">NDH-1 subunit D</fullName>
    </alternativeName>
</protein>
<gene>
    <name evidence="1" type="primary">nuoD</name>
    <name type="ordered locus">HPP12_1229</name>
</gene>
<reference key="1">
    <citation type="submission" date="2008-10" db="EMBL/GenBank/DDBJ databases">
        <title>The complete genome sequence of Helicobacter pylori strain P12.</title>
        <authorList>
            <person name="Fischer W."/>
            <person name="Windhager L."/>
            <person name="Karnholz A."/>
            <person name="Zeiller M."/>
            <person name="Zimmer R."/>
            <person name="Haas R."/>
        </authorList>
    </citation>
    <scope>NUCLEOTIDE SEQUENCE [LARGE SCALE GENOMIC DNA]</scope>
    <source>
        <strain>P12</strain>
    </source>
</reference>
<name>NUOD_HELP2</name>
<feature type="chain" id="PRO_0000371880" description="NADH-quinone oxidoreductase subunit D">
    <location>
        <begin position="1"/>
        <end position="409"/>
    </location>
</feature>